<feature type="chain" id="PRO_0000412793" description="Ribose 1,5-bisphosphate phosphokinase PhnN">
    <location>
        <begin position="1"/>
        <end position="188"/>
    </location>
</feature>
<feature type="binding site" evidence="1">
    <location>
        <begin position="9"/>
        <end position="16"/>
    </location>
    <ligand>
        <name>ATP</name>
        <dbReference type="ChEBI" id="CHEBI:30616"/>
    </ligand>
</feature>
<gene>
    <name evidence="1" type="primary">phnN</name>
    <name type="ordered locus">Pecwa_0582</name>
</gene>
<dbReference type="EC" id="2.7.4.23" evidence="1"/>
<dbReference type="EMBL" id="CP001790">
    <property type="protein sequence ID" value="ACX86410.1"/>
    <property type="molecule type" value="Genomic_DNA"/>
</dbReference>
<dbReference type="RefSeq" id="WP_012822345.1">
    <property type="nucleotide sequence ID" value="NC_013421.1"/>
</dbReference>
<dbReference type="SMR" id="D0KG93"/>
<dbReference type="GeneID" id="45850869"/>
<dbReference type="KEGG" id="pwa:Pecwa_0582"/>
<dbReference type="eggNOG" id="COG3709">
    <property type="taxonomic scope" value="Bacteria"/>
</dbReference>
<dbReference type="HOGENOM" id="CLU_102477_0_0_6"/>
<dbReference type="UniPathway" id="UPA00087">
    <property type="reaction ID" value="UER00175"/>
</dbReference>
<dbReference type="GO" id="GO:0005829">
    <property type="term" value="C:cytosol"/>
    <property type="evidence" value="ECO:0007669"/>
    <property type="project" value="TreeGrafter"/>
</dbReference>
<dbReference type="GO" id="GO:0005524">
    <property type="term" value="F:ATP binding"/>
    <property type="evidence" value="ECO:0007669"/>
    <property type="project" value="UniProtKB-KW"/>
</dbReference>
<dbReference type="GO" id="GO:0033863">
    <property type="term" value="F:ribose 1,5-bisphosphate phosphokinase activity"/>
    <property type="evidence" value="ECO:0007669"/>
    <property type="project" value="UniProtKB-UniRule"/>
</dbReference>
<dbReference type="GO" id="GO:0006015">
    <property type="term" value="P:5-phosphoribose 1-diphosphate biosynthetic process"/>
    <property type="evidence" value="ECO:0007669"/>
    <property type="project" value="UniProtKB-UniRule"/>
</dbReference>
<dbReference type="GO" id="GO:0019634">
    <property type="term" value="P:organic phosphonate metabolic process"/>
    <property type="evidence" value="ECO:0007669"/>
    <property type="project" value="UniProtKB-UniRule"/>
</dbReference>
<dbReference type="FunFam" id="3.40.50.300:FF:000979">
    <property type="entry name" value="Ribose 1,5-bisphosphate phosphokinase PhnN"/>
    <property type="match status" value="1"/>
</dbReference>
<dbReference type="Gene3D" id="3.40.50.300">
    <property type="entry name" value="P-loop containing nucleotide triphosphate hydrolases"/>
    <property type="match status" value="1"/>
</dbReference>
<dbReference type="HAMAP" id="MF_00836">
    <property type="entry name" value="PhnN"/>
    <property type="match status" value="1"/>
</dbReference>
<dbReference type="InterPro" id="IPR008145">
    <property type="entry name" value="GK/Ca_channel_bsu"/>
</dbReference>
<dbReference type="InterPro" id="IPR008144">
    <property type="entry name" value="Guanylate_kin-like_dom"/>
</dbReference>
<dbReference type="InterPro" id="IPR027417">
    <property type="entry name" value="P-loop_NTPase"/>
</dbReference>
<dbReference type="InterPro" id="IPR012699">
    <property type="entry name" value="PhnN"/>
</dbReference>
<dbReference type="NCBIfam" id="TIGR02322">
    <property type="entry name" value="phosphon_PhnN"/>
    <property type="match status" value="1"/>
</dbReference>
<dbReference type="NCBIfam" id="NF007485">
    <property type="entry name" value="PRK10078.1"/>
    <property type="match status" value="1"/>
</dbReference>
<dbReference type="PANTHER" id="PTHR23117">
    <property type="entry name" value="GUANYLATE KINASE-RELATED"/>
    <property type="match status" value="1"/>
</dbReference>
<dbReference type="PANTHER" id="PTHR23117:SF8">
    <property type="entry name" value="RIBOSE 1,5-BISPHOSPHATE PHOSPHOKINASE PHNN"/>
    <property type="match status" value="1"/>
</dbReference>
<dbReference type="Pfam" id="PF00625">
    <property type="entry name" value="Guanylate_kin"/>
    <property type="match status" value="1"/>
</dbReference>
<dbReference type="SMART" id="SM00072">
    <property type="entry name" value="GuKc"/>
    <property type="match status" value="1"/>
</dbReference>
<dbReference type="SUPFAM" id="SSF52540">
    <property type="entry name" value="P-loop containing nucleoside triphosphate hydrolases"/>
    <property type="match status" value="1"/>
</dbReference>
<dbReference type="PROSITE" id="PS50052">
    <property type="entry name" value="GUANYLATE_KINASE_2"/>
    <property type="match status" value="1"/>
</dbReference>
<sequence length="188" mass="21444">MTKLIYLIGPSGAGKDSLLRAIRQLSLPHLLVAHRYITRPAEIQGENHIALTPEEFAIRQQLGIFALNWQAHQCHYGIGIEIDYWLQRGSDVIVNGSRAYLTQARERYGNTLFPICLTVSESALRQRLRARGRESEQQIAMRLQRAEEEQNRLQSDCVLLNNDGDLQHTLSTFQSLLPLDRACTAHRE</sequence>
<reference key="1">
    <citation type="submission" date="2009-10" db="EMBL/GenBank/DDBJ databases">
        <title>Complete sequence of Pectobacterium wasabiae WPP163.</title>
        <authorList>
            <consortium name="US DOE Joint Genome Institute"/>
            <person name="Lucas S."/>
            <person name="Copeland A."/>
            <person name="Lapidus A."/>
            <person name="Glavina del Rio T."/>
            <person name="Tice H."/>
            <person name="Bruce D."/>
            <person name="Goodwin L."/>
            <person name="Pitluck S."/>
            <person name="Chertkov O."/>
            <person name="Brettin T."/>
            <person name="Detter J.C."/>
            <person name="Han C."/>
            <person name="Larimer F."/>
            <person name="Land M."/>
            <person name="Hauser L."/>
            <person name="Kyrpides N."/>
            <person name="Ovchinnikova G."/>
            <person name="Balakrishnan V."/>
            <person name="Glasner J."/>
            <person name="Perna N.T."/>
        </authorList>
    </citation>
    <scope>NUCLEOTIDE SEQUENCE [LARGE SCALE GENOMIC DNA]</scope>
    <source>
        <strain>WPP163</strain>
    </source>
</reference>
<organism>
    <name type="scientific">Pectobacterium parmentieri (strain WPP163)</name>
    <name type="common">Pectobacterium wasabiae (strain WPP163)</name>
    <dbReference type="NCBI Taxonomy" id="561231"/>
    <lineage>
        <taxon>Bacteria</taxon>
        <taxon>Pseudomonadati</taxon>
        <taxon>Pseudomonadota</taxon>
        <taxon>Gammaproteobacteria</taxon>
        <taxon>Enterobacterales</taxon>
        <taxon>Pectobacteriaceae</taxon>
        <taxon>Pectobacterium</taxon>
    </lineage>
</organism>
<comment type="function">
    <text evidence="1">Catalyzes the phosphorylation of ribose 1,5-bisphosphate to 5-phospho-D-ribosyl alpha-1-diphosphate (PRPP).</text>
</comment>
<comment type="catalytic activity">
    <reaction evidence="1">
        <text>alpha-D-ribose 1,5-bisphosphate + ATP = 5-phospho-alpha-D-ribose 1-diphosphate + ADP</text>
        <dbReference type="Rhea" id="RHEA:20109"/>
        <dbReference type="ChEBI" id="CHEBI:30616"/>
        <dbReference type="ChEBI" id="CHEBI:58017"/>
        <dbReference type="ChEBI" id="CHEBI:68688"/>
        <dbReference type="ChEBI" id="CHEBI:456216"/>
        <dbReference type="EC" id="2.7.4.23"/>
    </reaction>
</comment>
<comment type="pathway">
    <text evidence="1">Metabolic intermediate biosynthesis; 5-phospho-alpha-D-ribose 1-diphosphate biosynthesis; 5-phospho-alpha-D-ribose 1-diphosphate from D-ribose 5-phosphate (route II): step 3/3.</text>
</comment>
<comment type="similarity">
    <text evidence="1">Belongs to the ribose 1,5-bisphosphokinase family.</text>
</comment>
<evidence type="ECO:0000255" key="1">
    <source>
        <dbReference type="HAMAP-Rule" id="MF_00836"/>
    </source>
</evidence>
<protein>
    <recommendedName>
        <fullName evidence="1">Ribose 1,5-bisphosphate phosphokinase PhnN</fullName>
        <ecNumber evidence="1">2.7.4.23</ecNumber>
    </recommendedName>
    <alternativeName>
        <fullName evidence="1">Ribose 1,5-bisphosphokinase</fullName>
    </alternativeName>
</protein>
<keyword id="KW-0067">ATP-binding</keyword>
<keyword id="KW-0547">Nucleotide-binding</keyword>
<keyword id="KW-0808">Transferase</keyword>
<proteinExistence type="inferred from homology"/>
<name>PHNN_PECPW</name>
<accession>D0KG93</accession>